<name>RL20_HELPG</name>
<reference key="1">
    <citation type="journal article" date="2009" name="J. Bacteriol.">
        <title>The complete genome sequence of Helicobacter pylori strain G27.</title>
        <authorList>
            <person name="Baltrus D.A."/>
            <person name="Amieva M.R."/>
            <person name="Covacci A."/>
            <person name="Lowe T.M."/>
            <person name="Merrell D.S."/>
            <person name="Ottemann K.M."/>
            <person name="Stein M."/>
            <person name="Salama N.R."/>
            <person name="Guillemin K."/>
        </authorList>
    </citation>
    <scope>NUCLEOTIDE SEQUENCE [LARGE SCALE GENOMIC DNA]</scope>
    <source>
        <strain>G27</strain>
    </source>
</reference>
<comment type="function">
    <text evidence="1">Binds directly to 23S ribosomal RNA and is necessary for the in vitro assembly process of the 50S ribosomal subunit. It is not involved in the protein synthesizing functions of that subunit.</text>
</comment>
<comment type="similarity">
    <text evidence="1">Belongs to the bacterial ribosomal protein bL20 family.</text>
</comment>
<accession>B5Z9Q4</accession>
<proteinExistence type="inferred from homology"/>
<organism>
    <name type="scientific">Helicobacter pylori (strain G27)</name>
    <dbReference type="NCBI Taxonomy" id="563041"/>
    <lineage>
        <taxon>Bacteria</taxon>
        <taxon>Pseudomonadati</taxon>
        <taxon>Campylobacterota</taxon>
        <taxon>Epsilonproteobacteria</taxon>
        <taxon>Campylobacterales</taxon>
        <taxon>Helicobacteraceae</taxon>
        <taxon>Helicobacter</taxon>
    </lineage>
</organism>
<keyword id="KW-1185">Reference proteome</keyword>
<keyword id="KW-0687">Ribonucleoprotein</keyword>
<keyword id="KW-0689">Ribosomal protein</keyword>
<keyword id="KW-0694">RNA-binding</keyword>
<keyword id="KW-0699">rRNA-binding</keyword>
<dbReference type="EMBL" id="CP001173">
    <property type="protein sequence ID" value="ACI26884.1"/>
    <property type="molecule type" value="Genomic_DNA"/>
</dbReference>
<dbReference type="RefSeq" id="WP_001264150.1">
    <property type="nucleotide sequence ID" value="NC_011333.1"/>
</dbReference>
<dbReference type="SMR" id="B5Z9Q4"/>
<dbReference type="KEGG" id="hpg:HPG27_115"/>
<dbReference type="HOGENOM" id="CLU_123265_0_1_7"/>
<dbReference type="Proteomes" id="UP000001735">
    <property type="component" value="Chromosome"/>
</dbReference>
<dbReference type="GO" id="GO:1990904">
    <property type="term" value="C:ribonucleoprotein complex"/>
    <property type="evidence" value="ECO:0007669"/>
    <property type="project" value="UniProtKB-KW"/>
</dbReference>
<dbReference type="GO" id="GO:0005840">
    <property type="term" value="C:ribosome"/>
    <property type="evidence" value="ECO:0007669"/>
    <property type="project" value="UniProtKB-KW"/>
</dbReference>
<dbReference type="GO" id="GO:0019843">
    <property type="term" value="F:rRNA binding"/>
    <property type="evidence" value="ECO:0007669"/>
    <property type="project" value="UniProtKB-UniRule"/>
</dbReference>
<dbReference type="GO" id="GO:0003735">
    <property type="term" value="F:structural constituent of ribosome"/>
    <property type="evidence" value="ECO:0007669"/>
    <property type="project" value="InterPro"/>
</dbReference>
<dbReference type="GO" id="GO:0000027">
    <property type="term" value="P:ribosomal large subunit assembly"/>
    <property type="evidence" value="ECO:0007669"/>
    <property type="project" value="UniProtKB-UniRule"/>
</dbReference>
<dbReference type="GO" id="GO:0006412">
    <property type="term" value="P:translation"/>
    <property type="evidence" value="ECO:0007669"/>
    <property type="project" value="InterPro"/>
</dbReference>
<dbReference type="CDD" id="cd07026">
    <property type="entry name" value="Ribosomal_L20"/>
    <property type="match status" value="1"/>
</dbReference>
<dbReference type="FunFam" id="1.10.1900.20:FF:000001">
    <property type="entry name" value="50S ribosomal protein L20"/>
    <property type="match status" value="1"/>
</dbReference>
<dbReference type="Gene3D" id="6.10.160.10">
    <property type="match status" value="1"/>
</dbReference>
<dbReference type="Gene3D" id="1.10.1900.20">
    <property type="entry name" value="Ribosomal protein L20"/>
    <property type="match status" value="1"/>
</dbReference>
<dbReference type="HAMAP" id="MF_00382">
    <property type="entry name" value="Ribosomal_bL20"/>
    <property type="match status" value="1"/>
</dbReference>
<dbReference type="InterPro" id="IPR005813">
    <property type="entry name" value="Ribosomal_bL20"/>
</dbReference>
<dbReference type="InterPro" id="IPR049946">
    <property type="entry name" value="RIBOSOMAL_L20_CS"/>
</dbReference>
<dbReference type="InterPro" id="IPR035566">
    <property type="entry name" value="Ribosomal_protein_bL20_C"/>
</dbReference>
<dbReference type="NCBIfam" id="TIGR01032">
    <property type="entry name" value="rplT_bact"/>
    <property type="match status" value="1"/>
</dbReference>
<dbReference type="PANTHER" id="PTHR10986">
    <property type="entry name" value="39S RIBOSOMAL PROTEIN L20"/>
    <property type="match status" value="1"/>
</dbReference>
<dbReference type="Pfam" id="PF00453">
    <property type="entry name" value="Ribosomal_L20"/>
    <property type="match status" value="1"/>
</dbReference>
<dbReference type="PRINTS" id="PR00062">
    <property type="entry name" value="RIBOSOMALL20"/>
</dbReference>
<dbReference type="SUPFAM" id="SSF74731">
    <property type="entry name" value="Ribosomal protein L20"/>
    <property type="match status" value="1"/>
</dbReference>
<dbReference type="PROSITE" id="PS00937">
    <property type="entry name" value="RIBOSOMAL_L20"/>
    <property type="match status" value="1"/>
</dbReference>
<feature type="chain" id="PRO_1000122325" description="Large ribosomal subunit protein bL20">
    <location>
        <begin position="1"/>
        <end position="116"/>
    </location>
</feature>
<gene>
    <name evidence="1" type="primary">rplT</name>
    <name type="ordered locus">HPG27_115</name>
</gene>
<evidence type="ECO:0000255" key="1">
    <source>
        <dbReference type="HAMAP-Rule" id="MF_00382"/>
    </source>
</evidence>
<evidence type="ECO:0000305" key="2"/>
<sequence length="116" mass="14018">MRVKTGVVRRRRHKKVLKLARGFYSGRRKHFRKAKEQLERSMYYAFRDRKQKKRDFRSLWVVRINAACRMHNTSYSRFMHALKVANIELDRKVLADMAMNDMQAFTSVLESVKEHL</sequence>
<protein>
    <recommendedName>
        <fullName evidence="1">Large ribosomal subunit protein bL20</fullName>
    </recommendedName>
    <alternativeName>
        <fullName evidence="2">50S ribosomal protein L20</fullName>
    </alternativeName>
</protein>